<accession>P75035</accession>
<dbReference type="EMBL" id="U00089">
    <property type="protein sequence ID" value="AAB95651.1"/>
    <property type="molecule type" value="Genomic_DNA"/>
</dbReference>
<dbReference type="PIR" id="S73329">
    <property type="entry name" value="S73329"/>
</dbReference>
<dbReference type="RefSeq" id="NP_109839.1">
    <property type="nucleotide sequence ID" value="NC_000912.1"/>
</dbReference>
<dbReference type="SMR" id="P75035"/>
<dbReference type="EnsemblBacteria" id="AAB95651">
    <property type="protein sequence ID" value="AAB95651"/>
    <property type="gene ID" value="MPN_151"/>
</dbReference>
<dbReference type="KEGG" id="mpn:MPN_151"/>
<dbReference type="PATRIC" id="fig|272634.6.peg.168"/>
<dbReference type="HOGENOM" id="CLU_089620_0_0_14"/>
<dbReference type="BioCyc" id="MPNE272634:G1GJ3-255-MONOMER"/>
<dbReference type="Proteomes" id="UP000000808">
    <property type="component" value="Chromosome"/>
</dbReference>
<dbReference type="Gene3D" id="6.10.250.40">
    <property type="match status" value="1"/>
</dbReference>
<dbReference type="InterPro" id="IPR002862">
    <property type="entry name" value="DUF16"/>
</dbReference>
<dbReference type="Pfam" id="PF01519">
    <property type="entry name" value="DUF16"/>
    <property type="match status" value="1"/>
</dbReference>
<dbReference type="SUPFAM" id="SSF144266">
    <property type="entry name" value="MPN010-like"/>
    <property type="match status" value="1"/>
</dbReference>
<organism>
    <name type="scientific">Mycoplasma pneumoniae (strain ATCC 29342 / M129 / Subtype 1)</name>
    <name type="common">Mycoplasmoides pneumoniae</name>
    <dbReference type="NCBI Taxonomy" id="272634"/>
    <lineage>
        <taxon>Bacteria</taxon>
        <taxon>Bacillati</taxon>
        <taxon>Mycoplasmatota</taxon>
        <taxon>Mycoplasmoidales</taxon>
        <taxon>Mycoplasmoidaceae</taxon>
        <taxon>Mycoplasmoides</taxon>
    </lineage>
</organism>
<sequence>MEFNGNLNHMEKRKSGYVTQKQFNEYKDSNDQRLIKIETTLAAQGEQISQLVQIVFLQGKQIKELQAEQKAQRVEFNARMDRFESLVLKSLESIGNTLTDFGKRFDSMETRLDSMDGRLDSMETRLDKIDPPK</sequence>
<feature type="chain" id="PRO_0000221602" description="UPF0134 protein MPN_151">
    <location>
        <begin position="1"/>
        <end position="133"/>
    </location>
</feature>
<protein>
    <recommendedName>
        <fullName>UPF0134 protein MPN_151</fullName>
    </recommendedName>
</protein>
<name>Y151_MYCPN</name>
<gene>
    <name type="ordered locus">MPN_151</name>
    <name type="ORF">E07_orf133</name>
    <name type="ORF">MP003</name>
</gene>
<comment type="similarity">
    <text evidence="1">Belongs to the UPF0134 family.</text>
</comment>
<reference key="1">
    <citation type="journal article" date="1996" name="Nucleic Acids Res.">
        <title>Complete sequence analysis of the genome of the bacterium Mycoplasma pneumoniae.</title>
        <authorList>
            <person name="Himmelreich R."/>
            <person name="Hilbert H."/>
            <person name="Plagens H."/>
            <person name="Pirkl E."/>
            <person name="Li B.-C."/>
            <person name="Herrmann R."/>
        </authorList>
    </citation>
    <scope>NUCLEOTIDE SEQUENCE [LARGE SCALE GENOMIC DNA]</scope>
    <source>
        <strain>ATCC 29342 / M129 / Subtype 1</strain>
    </source>
</reference>
<keyword id="KW-1185">Reference proteome</keyword>
<evidence type="ECO:0000305" key="1"/>
<proteinExistence type="inferred from homology"/>